<accession>Q5TYW4</accession>
<accession>A4QN83</accession>
<proteinExistence type="evidence at transcript level"/>
<sequence length="2372" mass="267981">MAGDIILEDEEENILYDLLVNTEWPPETDTQLRGLKEHNSSLVAKAVTGPFRFFLHYLCPSSSTLPPGLVRLATKQVNWQLVLASNGKLLAVVQDQCVEIRSARDDFGSIIGKCQVPKDPNPHWRRVAWSHDCALLAYADSTGTVRVFDLMGSELFIIPPAMSFPGDFSYAAAGLMFLEYTGSAQWSAELLVITYSGQLKSYLVSVGTNQGFQENHTFSFSAHYSNGITTAIYHPGHRLLLVGGCESGDSDVSRASQCGITAWRVLSGLPHYKQVTSYEDDISSSQRRGFFKMPSFRLFSRHNGEQDGVFRMSLSPDGTILAVIHFSGSLSLWDIPSFKLRGSWKQEEQPGFDEINPEWKTSLEKRKKIKDKEQYQSLLDVSWWSETALILARCSGALTVSSVRTLKNLLGKSCEWFEPSPRVTSAHDGGFLSLECEVKLAHKRSRLESSVKGEEDDGDDDSDSDEEASAKARYFGYVKQGLYYVTEMERFAPPRKRPRTVIKNYRLVSLRSTTPEELYQRKIDNEEYGEALSLAQAYGLDSDLVYQRQWRKSTVSIASIQDYLSKIKKRSWVLHECVERVPENVDAAKELLQYGLKGTDLEALIAIGAREDQGRFILSGDLDMDDAPYEDFLSMEEELEQRKERESKKRQELLKKVDFSKLTLEQKELCRSRLKLLCYLDRLATYEEILGGPHAAEQRFDGEFFKKFRNQNIVLSARTYARESNVQALDILFTYHGAELLQHRLAILCNFPETTSPHEYSDLLPKAGVDKEGNLVLIPWEESRHRDLDWCEVLECREVVEPKPMDDCQFLYEEQPELERFRSADPFITLLTEWYLTRAQDIESHSRQVDCSLSLVRLGKEQNIPGLERLCDDLVTMETLVYETSCDLSVTLKELQQLRDIDKLRLLMKNSSEDRYVRNCFQWMVPFLHRCEGQRVGSASSLLREYLVTLAKDDLTLPLKLFQHSKPDCHPKIIGDSDQLMTVALKCIYSCERDDQLALCYDVLECLPQRGYGPETDTTKALHDQVDTLEKHLSVAEVLEKHGLQKPISFVRNSQNSKEEAHQLMVRLTRHTGRKNPPVSETVWRSLLQDLLDMQQNVYTCLEPETCHQVFVESLLCSSREENVRLAGQLMHCSGVSEDTPVSVSLRGKAHARVSYSRSVELVLAAAREYFNSSATLSDPCMSLARSCLQLITDCPPLVQEELDLITALSRLEQFGVKILPLQVRLRTDRLSLIKECISQCPTAYRQSLLLLSLARLLRVAGDDEAKRKGQVLTLLAEQALLCQDFKASYIHCQELMAAGYSEGWDVCAQLGQCETFTQLSGRQELMAFSLTHCPPSRIQTLLAASSSLQTQVLYQAVNYKIDPSQARRTGSELFEIKVLDDENVTEIPTKLYSVGAAVPGSINPTDLLHRTTARTIEVLTNTTMSTKAVLTTVIDSHWWRESLSLLRPLHGPAVDRNRAGAANQNADLEKQGCSPFYEELFDDPYVNTSEDVYSSYHYNPQEDFAEVLLRTGKLAETNSEGQNLFPATEVLLQLASDAFPKDMTLALAYLLALPQVLDANTCFEKQPPSALSLHLAAYYYSLQIYSRLAPCFKDKCSPLYRADPRALIRLVTKHVTDHAGCDWPDEDLEALIGQLRLYSERLTDFTQAQVLQGLGRGVDVQRFSSDNQYKKETILGLAETLDENVYSISRSLAHRYSIPLWEVHMTHLEFLFTDSGLSTKDIEGRTEALGLFETLKTDPESFYMHMTKYVYPSIAGTDQLRLLFYFTLLENCGCANYFSQTAMKPDTHLKLLKKLKAVAVGLDYKKMTEENSDPLKALEPILTSQNVLSISKLASRIPQKGGEALTSSAVHSTWLHKLFWEGDQHVLKKAPQTDQDFLHAYDTCAKYFDRLLPVDFVNFLDAITFSPEAANKLSVGTRLEITKRAQKALKSISDKTKKKGNDDRSENSAFNFDTALTHVQQSLTHLETLSHSFLLSLKTSQEELLQKYSRIYDLSRSEQSKVHHLAVTMATDGQPLERIEQLLSVAVGTSDLSPKSVVQDAVERIISALSGDKDVLKDYADPLKVLEGIVAVVHTNVQSGGNIVTSEDMLEWLRPFCGDDTKPVRPRIEVLQILEHSFNLSDQDIHLLVYFRSQAILKACWPNRKCEMEDVENEKKRNSLFLELLESSSKWEEFQHLMLLLQAWPPVTDKSRLETDQNPWVCLTSTLLVHSSSVSQINIGNEVLSMCRSLYLTKHKLNPQGIGNISSLLLNAGLKLPALKLMTESKDEHLLKLTQDQIRNITEVTEEVCDTELLSLLLNAGMLISCVDTAVYPSLVSHMLAQGDWDVEKAAYDLQQAGHSAQAGSLLLSYRGSHPGQFTFNSALAVIRKWL</sequence>
<keyword id="KW-0175">Coiled coil</keyword>
<keyword id="KW-0256">Endoplasmic reticulum</keyword>
<keyword id="KW-0653">Protein transport</keyword>
<keyword id="KW-1185">Reference proteome</keyword>
<keyword id="KW-0677">Repeat</keyword>
<keyword id="KW-0813">Transport</keyword>
<keyword id="KW-0853">WD repeat</keyword>
<dbReference type="EMBL" id="BX649472">
    <property type="protein sequence ID" value="CAH68923.1"/>
    <property type="molecule type" value="Genomic_DNA"/>
</dbReference>
<dbReference type="EMBL" id="BX649264">
    <property type="protein sequence ID" value="CAH68923.1"/>
    <property type="status" value="JOINED"/>
    <property type="molecule type" value="Genomic_DNA"/>
</dbReference>
<dbReference type="EMBL" id="BX649299">
    <property type="protein sequence ID" value="CAH68923.1"/>
    <property type="status" value="JOINED"/>
    <property type="molecule type" value="Genomic_DNA"/>
</dbReference>
<dbReference type="EMBL" id="BX649264">
    <property type="protein sequence ID" value="CAH68952.1"/>
    <property type="molecule type" value="Genomic_DNA"/>
</dbReference>
<dbReference type="EMBL" id="BX649299">
    <property type="protein sequence ID" value="CAH68952.1"/>
    <property type="status" value="JOINED"/>
    <property type="molecule type" value="Genomic_DNA"/>
</dbReference>
<dbReference type="EMBL" id="BX649472">
    <property type="protein sequence ID" value="CAH68952.1"/>
    <property type="status" value="JOINED"/>
    <property type="molecule type" value="Genomic_DNA"/>
</dbReference>
<dbReference type="EMBL" id="BX649299">
    <property type="protein sequence ID" value="CAI11777.1"/>
    <property type="molecule type" value="Genomic_DNA"/>
</dbReference>
<dbReference type="EMBL" id="BX649264">
    <property type="protein sequence ID" value="CAI11777.1"/>
    <property type="status" value="JOINED"/>
    <property type="molecule type" value="Genomic_DNA"/>
</dbReference>
<dbReference type="EMBL" id="BX649472">
    <property type="protein sequence ID" value="CAI11777.1"/>
    <property type="status" value="JOINED"/>
    <property type="molecule type" value="Genomic_DNA"/>
</dbReference>
<dbReference type="EMBL" id="BC135054">
    <property type="protein sequence ID" value="AAI35055.1"/>
    <property type="molecule type" value="mRNA"/>
</dbReference>
<dbReference type="RefSeq" id="NP_001038272.1">
    <property type="nucleotide sequence ID" value="NM_001044807.1"/>
</dbReference>
<dbReference type="FunCoup" id="Q5TYW4">
    <property type="interactions" value="1600"/>
</dbReference>
<dbReference type="STRING" id="7955.ENSDARP00000047833"/>
<dbReference type="PaxDb" id="7955-ENSDARP00000047833"/>
<dbReference type="Ensembl" id="ENSDART00000047834">
    <property type="protein sequence ID" value="ENSDARP00000047833"/>
    <property type="gene ID" value="ENSDARG00000008593"/>
</dbReference>
<dbReference type="GeneID" id="556592"/>
<dbReference type="KEGG" id="dre:556592"/>
<dbReference type="AGR" id="ZFIN:ZDB-GENE-041014-367"/>
<dbReference type="CTD" id="51594"/>
<dbReference type="ZFIN" id="ZDB-GENE-041014-367">
    <property type="gene designation" value="nbas"/>
</dbReference>
<dbReference type="eggNOG" id="KOG1797">
    <property type="taxonomic scope" value="Eukaryota"/>
</dbReference>
<dbReference type="HOGENOM" id="CLU_001315_0_0_1"/>
<dbReference type="InParanoid" id="Q5TYW4"/>
<dbReference type="OMA" id="KHMLPAE"/>
<dbReference type="OrthoDB" id="19988at2759"/>
<dbReference type="PhylomeDB" id="Q5TYW4"/>
<dbReference type="TreeFam" id="TF313901"/>
<dbReference type="Reactome" id="R-DRE-6811434">
    <property type="pathway name" value="COPI-dependent Golgi-to-ER retrograde traffic"/>
</dbReference>
<dbReference type="PRO" id="PR:Q5TYW4"/>
<dbReference type="Proteomes" id="UP000000437">
    <property type="component" value="Chromosome 20"/>
</dbReference>
<dbReference type="Bgee" id="ENSDARG00000008593">
    <property type="expression patterns" value="Expressed in tail and 20 other cell types or tissues"/>
</dbReference>
<dbReference type="ExpressionAtlas" id="Q5TYW4">
    <property type="expression patterns" value="baseline and differential"/>
</dbReference>
<dbReference type="GO" id="GO:0070939">
    <property type="term" value="C:Dsl1/NZR complex"/>
    <property type="evidence" value="ECO:0000318"/>
    <property type="project" value="GO_Central"/>
</dbReference>
<dbReference type="GO" id="GO:0000149">
    <property type="term" value="F:SNARE binding"/>
    <property type="evidence" value="ECO:0000318"/>
    <property type="project" value="GO_Central"/>
</dbReference>
<dbReference type="GO" id="GO:0043009">
    <property type="term" value="P:chordate embryonic development"/>
    <property type="evidence" value="ECO:0000315"/>
    <property type="project" value="ZFIN"/>
</dbReference>
<dbReference type="GO" id="GO:0048703">
    <property type="term" value="P:embryonic viscerocranium morphogenesis"/>
    <property type="evidence" value="ECO:0000315"/>
    <property type="project" value="ZFIN"/>
</dbReference>
<dbReference type="GO" id="GO:2000623">
    <property type="term" value="P:negative regulation of nuclear-transcribed mRNA catabolic process, nonsense-mediated decay"/>
    <property type="evidence" value="ECO:0000315"/>
    <property type="project" value="UniProtKB"/>
</dbReference>
<dbReference type="GO" id="GO:0000956">
    <property type="term" value="P:nuclear-transcribed mRNA catabolic process"/>
    <property type="evidence" value="ECO:0000315"/>
    <property type="project" value="UniProtKB"/>
</dbReference>
<dbReference type="GO" id="GO:0000184">
    <property type="term" value="P:nuclear-transcribed mRNA catabolic process, nonsense-mediated decay"/>
    <property type="evidence" value="ECO:0000315"/>
    <property type="project" value="ZFIN"/>
</dbReference>
<dbReference type="GO" id="GO:0015031">
    <property type="term" value="P:protein transport"/>
    <property type="evidence" value="ECO:0007669"/>
    <property type="project" value="UniProtKB-KW"/>
</dbReference>
<dbReference type="GO" id="GO:0006890">
    <property type="term" value="P:retrograde vesicle-mediated transport, Golgi to endoplasmic reticulum"/>
    <property type="evidence" value="ECO:0000318"/>
    <property type="project" value="GO_Central"/>
</dbReference>
<dbReference type="Gene3D" id="2.130.10.10">
    <property type="entry name" value="YVTN repeat-like/Quinoprotein amine dehydrogenase"/>
    <property type="match status" value="1"/>
</dbReference>
<dbReference type="InterPro" id="IPR054751">
    <property type="entry name" value="NBAS_C"/>
</dbReference>
<dbReference type="InterPro" id="IPR029145">
    <property type="entry name" value="NBAS_N"/>
</dbReference>
<dbReference type="InterPro" id="IPR013244">
    <property type="entry name" value="Sec39_domain"/>
</dbReference>
<dbReference type="InterPro" id="IPR015943">
    <property type="entry name" value="WD40/YVTN_repeat-like_dom_sf"/>
</dbReference>
<dbReference type="InterPro" id="IPR036322">
    <property type="entry name" value="WD40_repeat_dom_sf"/>
</dbReference>
<dbReference type="InterPro" id="IPR001680">
    <property type="entry name" value="WD40_rpt"/>
</dbReference>
<dbReference type="PANTHER" id="PTHR15922:SF2">
    <property type="entry name" value="NBAS SUBUNIT OF NRZ TETHERING COMPLEX"/>
    <property type="match status" value="1"/>
</dbReference>
<dbReference type="PANTHER" id="PTHR15922">
    <property type="entry name" value="NEUROBLASTOMA-AMPLIFIED SEQUENCE"/>
    <property type="match status" value="1"/>
</dbReference>
<dbReference type="Pfam" id="PF22913">
    <property type="entry name" value="NBAS_11th"/>
    <property type="match status" value="1"/>
</dbReference>
<dbReference type="Pfam" id="PF15492">
    <property type="entry name" value="Nbas_N"/>
    <property type="match status" value="1"/>
</dbReference>
<dbReference type="Pfam" id="PF08314">
    <property type="entry name" value="Sec39"/>
    <property type="match status" value="2"/>
</dbReference>
<dbReference type="SMART" id="SM00320">
    <property type="entry name" value="WD40"/>
    <property type="match status" value="2"/>
</dbReference>
<dbReference type="SUPFAM" id="SSF50978">
    <property type="entry name" value="WD40 repeat-like"/>
    <property type="match status" value="1"/>
</dbReference>
<name>NBAS_DANRE</name>
<protein>
    <recommendedName>
        <fullName evidence="1">NBAS subunit of NRZ tethering complex</fullName>
    </recommendedName>
    <alternativeName>
        <fullName evidence="1">Neuroblastoma-amplified gene protein homolog</fullName>
    </alternativeName>
    <alternativeName>
        <fullName evidence="5">Neuroblastoma-amplified sequence</fullName>
    </alternativeName>
</protein>
<organism>
    <name type="scientific">Danio rerio</name>
    <name type="common">Zebrafish</name>
    <name type="synonym">Brachydanio rerio</name>
    <dbReference type="NCBI Taxonomy" id="7955"/>
    <lineage>
        <taxon>Eukaryota</taxon>
        <taxon>Metazoa</taxon>
        <taxon>Chordata</taxon>
        <taxon>Craniata</taxon>
        <taxon>Vertebrata</taxon>
        <taxon>Euteleostomi</taxon>
        <taxon>Actinopterygii</taxon>
        <taxon>Neopterygii</taxon>
        <taxon>Teleostei</taxon>
        <taxon>Ostariophysi</taxon>
        <taxon>Cypriniformes</taxon>
        <taxon>Danionidae</taxon>
        <taxon>Danioninae</taxon>
        <taxon>Danio</taxon>
    </lineage>
</organism>
<gene>
    <name evidence="1" type="primary">nbas</name>
    <name evidence="5" type="synonym">nag</name>
    <name type="ORF">si:ch211-214k9.1</name>
</gene>
<feature type="chain" id="PRO_0000292807" description="NBAS subunit of NRZ tethering complex">
    <location>
        <begin position="1"/>
        <end position="2372"/>
    </location>
</feature>
<feature type="repeat" description="WD 1">
    <location>
        <begin position="119"/>
        <end position="158"/>
    </location>
</feature>
<feature type="repeat" description="WD 2">
    <location>
        <begin position="304"/>
        <end position="343"/>
    </location>
</feature>
<feature type="region of interest" description="Disordered" evidence="3">
    <location>
        <begin position="447"/>
        <end position="468"/>
    </location>
</feature>
<feature type="coiled-coil region" evidence="2">
    <location>
        <begin position="629"/>
        <end position="668"/>
    </location>
</feature>
<feature type="compositionally biased region" description="Acidic residues" evidence="3">
    <location>
        <begin position="454"/>
        <end position="467"/>
    </location>
</feature>
<feature type="sequence conflict" description="In Ref. 2; AAI35055." evidence="6" ref="2">
    <original>C</original>
    <variation>WYS</variation>
    <location>
        <position position="59"/>
    </location>
</feature>
<feature type="sequence conflict" description="In Ref. 2; AAI35055." evidence="6" ref="2">
    <original>N</original>
    <variation>S</variation>
    <location>
        <position position="226"/>
    </location>
</feature>
<feature type="sequence conflict" description="In Ref. 2; AAI35055." evidence="6" ref="2">
    <original>Y</original>
    <variation>H</variation>
    <location>
        <position position="233"/>
    </location>
</feature>
<feature type="sequence conflict" description="In Ref. 2; AAI35055." evidence="6" ref="2">
    <original>R</original>
    <variation>Q</variation>
    <location>
        <position position="288"/>
    </location>
</feature>
<feature type="sequence conflict" description="In Ref. 2; AAI35055." evidence="6" ref="2">
    <original>I</original>
    <variation>V</variation>
    <location>
        <position position="320"/>
    </location>
</feature>
<feature type="sequence conflict" description="In Ref. 2; AAI35055." evidence="6" ref="2">
    <original>R</original>
    <variation>K</variation>
    <location>
        <position position="366"/>
    </location>
</feature>
<feature type="sequence conflict" description="In Ref. 2; AAI35055." evidence="6" ref="2">
    <original>I</original>
    <variation>K</variation>
    <location>
        <position position="369"/>
    </location>
</feature>
<evidence type="ECO:0000250" key="1">
    <source>
        <dbReference type="UniProtKB" id="A2RRP1"/>
    </source>
</evidence>
<evidence type="ECO:0000255" key="2"/>
<evidence type="ECO:0000256" key="3">
    <source>
        <dbReference type="SAM" id="MobiDB-lite"/>
    </source>
</evidence>
<evidence type="ECO:0000269" key="4">
    <source>
    </source>
</evidence>
<evidence type="ECO:0000303" key="5">
    <source>
    </source>
</evidence>
<evidence type="ECO:0000305" key="6"/>
<reference key="1">
    <citation type="journal article" date="2013" name="Nature">
        <title>The zebrafish reference genome sequence and its relationship to the human genome.</title>
        <authorList>
            <person name="Howe K."/>
            <person name="Clark M.D."/>
            <person name="Torroja C.F."/>
            <person name="Torrance J."/>
            <person name="Berthelot C."/>
            <person name="Muffato M."/>
            <person name="Collins J.E."/>
            <person name="Humphray S."/>
            <person name="McLaren K."/>
            <person name="Matthews L."/>
            <person name="McLaren S."/>
            <person name="Sealy I."/>
            <person name="Caccamo M."/>
            <person name="Churcher C."/>
            <person name="Scott C."/>
            <person name="Barrett J.C."/>
            <person name="Koch R."/>
            <person name="Rauch G.J."/>
            <person name="White S."/>
            <person name="Chow W."/>
            <person name="Kilian B."/>
            <person name="Quintais L.T."/>
            <person name="Guerra-Assuncao J.A."/>
            <person name="Zhou Y."/>
            <person name="Gu Y."/>
            <person name="Yen J."/>
            <person name="Vogel J.H."/>
            <person name="Eyre T."/>
            <person name="Redmond S."/>
            <person name="Banerjee R."/>
            <person name="Chi J."/>
            <person name="Fu B."/>
            <person name="Langley E."/>
            <person name="Maguire S.F."/>
            <person name="Laird G.K."/>
            <person name="Lloyd D."/>
            <person name="Kenyon E."/>
            <person name="Donaldson S."/>
            <person name="Sehra H."/>
            <person name="Almeida-King J."/>
            <person name="Loveland J."/>
            <person name="Trevanion S."/>
            <person name="Jones M."/>
            <person name="Quail M."/>
            <person name="Willey D."/>
            <person name="Hunt A."/>
            <person name="Burton J."/>
            <person name="Sims S."/>
            <person name="McLay K."/>
            <person name="Plumb B."/>
            <person name="Davis J."/>
            <person name="Clee C."/>
            <person name="Oliver K."/>
            <person name="Clark R."/>
            <person name="Riddle C."/>
            <person name="Elliot D."/>
            <person name="Threadgold G."/>
            <person name="Harden G."/>
            <person name="Ware D."/>
            <person name="Begum S."/>
            <person name="Mortimore B."/>
            <person name="Kerry G."/>
            <person name="Heath P."/>
            <person name="Phillimore B."/>
            <person name="Tracey A."/>
            <person name="Corby N."/>
            <person name="Dunn M."/>
            <person name="Johnson C."/>
            <person name="Wood J."/>
            <person name="Clark S."/>
            <person name="Pelan S."/>
            <person name="Griffiths G."/>
            <person name="Smith M."/>
            <person name="Glithero R."/>
            <person name="Howden P."/>
            <person name="Barker N."/>
            <person name="Lloyd C."/>
            <person name="Stevens C."/>
            <person name="Harley J."/>
            <person name="Holt K."/>
            <person name="Panagiotidis G."/>
            <person name="Lovell J."/>
            <person name="Beasley H."/>
            <person name="Henderson C."/>
            <person name="Gordon D."/>
            <person name="Auger K."/>
            <person name="Wright D."/>
            <person name="Collins J."/>
            <person name="Raisen C."/>
            <person name="Dyer L."/>
            <person name="Leung K."/>
            <person name="Robertson L."/>
            <person name="Ambridge K."/>
            <person name="Leongamornlert D."/>
            <person name="McGuire S."/>
            <person name="Gilderthorp R."/>
            <person name="Griffiths C."/>
            <person name="Manthravadi D."/>
            <person name="Nichol S."/>
            <person name="Barker G."/>
            <person name="Whitehead S."/>
            <person name="Kay M."/>
            <person name="Brown J."/>
            <person name="Murnane C."/>
            <person name="Gray E."/>
            <person name="Humphries M."/>
            <person name="Sycamore N."/>
            <person name="Barker D."/>
            <person name="Saunders D."/>
            <person name="Wallis J."/>
            <person name="Babbage A."/>
            <person name="Hammond S."/>
            <person name="Mashreghi-Mohammadi M."/>
            <person name="Barr L."/>
            <person name="Martin S."/>
            <person name="Wray P."/>
            <person name="Ellington A."/>
            <person name="Matthews N."/>
            <person name="Ellwood M."/>
            <person name="Woodmansey R."/>
            <person name="Clark G."/>
            <person name="Cooper J."/>
            <person name="Tromans A."/>
            <person name="Grafham D."/>
            <person name="Skuce C."/>
            <person name="Pandian R."/>
            <person name="Andrews R."/>
            <person name="Harrison E."/>
            <person name="Kimberley A."/>
            <person name="Garnett J."/>
            <person name="Fosker N."/>
            <person name="Hall R."/>
            <person name="Garner P."/>
            <person name="Kelly D."/>
            <person name="Bird C."/>
            <person name="Palmer S."/>
            <person name="Gehring I."/>
            <person name="Berger A."/>
            <person name="Dooley C.M."/>
            <person name="Ersan-Urun Z."/>
            <person name="Eser C."/>
            <person name="Geiger H."/>
            <person name="Geisler M."/>
            <person name="Karotki L."/>
            <person name="Kirn A."/>
            <person name="Konantz J."/>
            <person name="Konantz M."/>
            <person name="Oberlander M."/>
            <person name="Rudolph-Geiger S."/>
            <person name="Teucke M."/>
            <person name="Lanz C."/>
            <person name="Raddatz G."/>
            <person name="Osoegawa K."/>
            <person name="Zhu B."/>
            <person name="Rapp A."/>
            <person name="Widaa S."/>
            <person name="Langford C."/>
            <person name="Yang F."/>
            <person name="Schuster S.C."/>
            <person name="Carter N.P."/>
            <person name="Harrow J."/>
            <person name="Ning Z."/>
            <person name="Herrero J."/>
            <person name="Searle S.M."/>
            <person name="Enright A."/>
            <person name="Geisler R."/>
            <person name="Plasterk R.H."/>
            <person name="Lee C."/>
            <person name="Westerfield M."/>
            <person name="de Jong P.J."/>
            <person name="Zon L.I."/>
            <person name="Postlethwait J.H."/>
            <person name="Nusslein-Volhard C."/>
            <person name="Hubbard T.J."/>
            <person name="Roest Crollius H."/>
            <person name="Rogers J."/>
            <person name="Stemple D.L."/>
        </authorList>
    </citation>
    <scope>NUCLEOTIDE SEQUENCE [LARGE SCALE GENOMIC DNA]</scope>
    <source>
        <strain>Tuebingen</strain>
    </source>
</reference>
<reference key="2">
    <citation type="submission" date="2007-03" db="EMBL/GenBank/DDBJ databases">
        <authorList>
            <consortium name="NIH - Zebrafish Gene Collection (ZGC) project"/>
        </authorList>
    </citation>
    <scope>NUCLEOTIDE SEQUENCE [LARGE SCALE MRNA] OF 1-369</scope>
    <source>
        <tissue>Embryo</tissue>
    </source>
</reference>
<reference key="3">
    <citation type="journal article" date="2011" name="Nucleic Acids Res.">
        <title>Dhx34 and Nbas function in the NMD pathway and are required for embryonic development in zebrafish.</title>
        <authorList>
            <person name="Anastasaki C."/>
            <person name="Longman D."/>
            <person name="Capper A."/>
            <person name="Patton E.E."/>
            <person name="Caceres J.F."/>
        </authorList>
    </citation>
    <scope>FUNCTION</scope>
    <scope>DEVELOPMENTAL STAGE</scope>
    <scope>DISRUPTION PHENOTYPE</scope>
</reference>
<comment type="function">
    <text evidence="1 4">Involved in Golgi-to-endoplasmic reticulum (ER) retrograde transport; the function is proposed to depend on its association in the NRZ complex which is believed to play a role in SNARE assembly at the ER (By similarity). Required for normal embryonic development (PubMed:21227923). May play a role in the nonsense-mediated decay pathway of mRNAs containing premature stop codons (PubMed:21227923).</text>
</comment>
<comment type="subcellular location">
    <subcellularLocation>
        <location evidence="1">Endoplasmic reticulum</location>
    </subcellularLocation>
</comment>
<comment type="developmental stage">
    <text evidence="4">Expressed prior to gastrulation and following gastrulation cell movements at 10 hours post fertilization (PubMed:21227923). Expressed ubiquitously during early development (PubMed:21227923).</text>
</comment>
<comment type="disruption phenotype">
    <text evidence="4">Morpholino knockdown leads to both intermediate and severe phenotypes of abnormal embryonic development (PubMed:21227923). Intermediate phenotypes show areas of necrosis in the brain and neural structures with abnormal stacking of somites (PubMed:21227923). Severe phenotypes show a small body with few recognizable structures on top of the yolk sac with necrotic tissue present in the anterior and posterior regions (PubMed:21227923). Increase in premature stop codon containing slc24a5 mRNA transcript levels in melanocytes (PubMed:21227923).</text>
</comment>